<proteinExistence type="inferred from homology"/>
<gene>
    <name evidence="1" type="primary">deoC</name>
    <name type="ordered locus">BCG_0519</name>
</gene>
<dbReference type="EC" id="4.1.2.4" evidence="1"/>
<dbReference type="EMBL" id="AM408590">
    <property type="protein sequence ID" value="CAL70504.1"/>
    <property type="molecule type" value="Genomic_DNA"/>
</dbReference>
<dbReference type="RefSeq" id="WP_003402347.1">
    <property type="nucleotide sequence ID" value="NC_008769.1"/>
</dbReference>
<dbReference type="SMR" id="A1KFV2"/>
<dbReference type="KEGG" id="mbb:BCG_0519"/>
<dbReference type="HOGENOM" id="CLU_053595_0_0_11"/>
<dbReference type="UniPathway" id="UPA00002">
    <property type="reaction ID" value="UER00468"/>
</dbReference>
<dbReference type="Proteomes" id="UP000001472">
    <property type="component" value="Chromosome"/>
</dbReference>
<dbReference type="GO" id="GO:0005737">
    <property type="term" value="C:cytoplasm"/>
    <property type="evidence" value="ECO:0007669"/>
    <property type="project" value="UniProtKB-SubCell"/>
</dbReference>
<dbReference type="GO" id="GO:0004139">
    <property type="term" value="F:deoxyribose-phosphate aldolase activity"/>
    <property type="evidence" value="ECO:0007669"/>
    <property type="project" value="UniProtKB-UniRule"/>
</dbReference>
<dbReference type="GO" id="GO:0006018">
    <property type="term" value="P:2-deoxyribose 1-phosphate catabolic process"/>
    <property type="evidence" value="ECO:0007669"/>
    <property type="project" value="UniProtKB-UniRule"/>
</dbReference>
<dbReference type="GO" id="GO:0016052">
    <property type="term" value="P:carbohydrate catabolic process"/>
    <property type="evidence" value="ECO:0007669"/>
    <property type="project" value="TreeGrafter"/>
</dbReference>
<dbReference type="GO" id="GO:0009264">
    <property type="term" value="P:deoxyribonucleotide catabolic process"/>
    <property type="evidence" value="ECO:0007669"/>
    <property type="project" value="InterPro"/>
</dbReference>
<dbReference type="CDD" id="cd00959">
    <property type="entry name" value="DeoC"/>
    <property type="match status" value="1"/>
</dbReference>
<dbReference type="FunFam" id="3.20.20.70:FF:000044">
    <property type="entry name" value="Deoxyribose-phosphate aldolase"/>
    <property type="match status" value="1"/>
</dbReference>
<dbReference type="Gene3D" id="3.20.20.70">
    <property type="entry name" value="Aldolase class I"/>
    <property type="match status" value="1"/>
</dbReference>
<dbReference type="HAMAP" id="MF_00114">
    <property type="entry name" value="DeoC_type1"/>
    <property type="match status" value="1"/>
</dbReference>
<dbReference type="InterPro" id="IPR013785">
    <property type="entry name" value="Aldolase_TIM"/>
</dbReference>
<dbReference type="InterPro" id="IPR011343">
    <property type="entry name" value="DeoC"/>
</dbReference>
<dbReference type="InterPro" id="IPR002915">
    <property type="entry name" value="DeoC/FbaB/LacD_aldolase"/>
</dbReference>
<dbReference type="InterPro" id="IPR028581">
    <property type="entry name" value="DeoC_typeI"/>
</dbReference>
<dbReference type="NCBIfam" id="TIGR00126">
    <property type="entry name" value="deoC"/>
    <property type="match status" value="1"/>
</dbReference>
<dbReference type="PANTHER" id="PTHR10889">
    <property type="entry name" value="DEOXYRIBOSE-PHOSPHATE ALDOLASE"/>
    <property type="match status" value="1"/>
</dbReference>
<dbReference type="PANTHER" id="PTHR10889:SF1">
    <property type="entry name" value="DEOXYRIBOSE-PHOSPHATE ALDOLASE"/>
    <property type="match status" value="1"/>
</dbReference>
<dbReference type="Pfam" id="PF01791">
    <property type="entry name" value="DeoC"/>
    <property type="match status" value="1"/>
</dbReference>
<dbReference type="PIRSF" id="PIRSF001357">
    <property type="entry name" value="DeoC"/>
    <property type="match status" value="1"/>
</dbReference>
<dbReference type="SMART" id="SM01133">
    <property type="entry name" value="DeoC"/>
    <property type="match status" value="1"/>
</dbReference>
<dbReference type="SUPFAM" id="SSF51569">
    <property type="entry name" value="Aldolase"/>
    <property type="match status" value="1"/>
</dbReference>
<feature type="chain" id="PRO_1000015325" description="Deoxyribose-phosphate aldolase">
    <location>
        <begin position="1"/>
        <end position="224"/>
    </location>
</feature>
<feature type="active site" description="Proton donor/acceptor" evidence="1">
    <location>
        <position position="93"/>
    </location>
</feature>
<feature type="active site" description="Schiff-base intermediate with acetaldehyde" evidence="1">
    <location>
        <position position="159"/>
    </location>
</feature>
<feature type="active site" description="Proton donor/acceptor" evidence="1">
    <location>
        <position position="189"/>
    </location>
</feature>
<protein>
    <recommendedName>
        <fullName evidence="1">Deoxyribose-phosphate aldolase</fullName>
        <shortName evidence="1">DERA</shortName>
        <ecNumber evidence="1">4.1.2.4</ecNumber>
    </recommendedName>
    <alternativeName>
        <fullName evidence="1">2-deoxy-D-ribose 5-phosphate aldolase</fullName>
    </alternativeName>
    <alternativeName>
        <fullName evidence="1">Phosphodeoxyriboaldolase</fullName>
        <shortName evidence="1">Deoxyriboaldolase</shortName>
    </alternativeName>
</protein>
<reference key="1">
    <citation type="journal article" date="2007" name="Proc. Natl. Acad. Sci. U.S.A.">
        <title>Genome plasticity of BCG and impact on vaccine efficacy.</title>
        <authorList>
            <person name="Brosch R."/>
            <person name="Gordon S.V."/>
            <person name="Garnier T."/>
            <person name="Eiglmeier K."/>
            <person name="Frigui W."/>
            <person name="Valenti P."/>
            <person name="Dos Santos S."/>
            <person name="Duthoy S."/>
            <person name="Lacroix C."/>
            <person name="Garcia-Pelayo C."/>
            <person name="Inwald J.K."/>
            <person name="Golby P."/>
            <person name="Garcia J.N."/>
            <person name="Hewinson R.G."/>
            <person name="Behr M.A."/>
            <person name="Quail M.A."/>
            <person name="Churcher C."/>
            <person name="Barrell B.G."/>
            <person name="Parkhill J."/>
            <person name="Cole S.T."/>
        </authorList>
    </citation>
    <scope>NUCLEOTIDE SEQUENCE [LARGE SCALE GENOMIC DNA]</scope>
    <source>
        <strain>BCG / Pasteur 1173P2</strain>
    </source>
</reference>
<sequence length="224" mass="22068">MLGQPTRAQLAALVDHTLLKPETTRADVAALVAEAAELGVYAVCVSPSMVPVAVQAGGVRVAAVTGFPSGKHVSSVKAHEAAAALASGASEIDMVIDIGAALCGDIDAVRSDIEAVRAAAAGAVLKVIVESAVLLGQSNAHTLVDACRAAEDAGADFVKTSTGCHPAGGATVRAVELMAETVGPRLGVKASGGIRTAADAVAMLNAGATRLGLSGTRAVLDGLS</sequence>
<organism>
    <name type="scientific">Mycobacterium bovis (strain BCG / Pasteur 1173P2)</name>
    <dbReference type="NCBI Taxonomy" id="410289"/>
    <lineage>
        <taxon>Bacteria</taxon>
        <taxon>Bacillati</taxon>
        <taxon>Actinomycetota</taxon>
        <taxon>Actinomycetes</taxon>
        <taxon>Mycobacteriales</taxon>
        <taxon>Mycobacteriaceae</taxon>
        <taxon>Mycobacterium</taxon>
        <taxon>Mycobacterium tuberculosis complex</taxon>
    </lineage>
</organism>
<evidence type="ECO:0000255" key="1">
    <source>
        <dbReference type="HAMAP-Rule" id="MF_00114"/>
    </source>
</evidence>
<name>DEOC_MYCBP</name>
<accession>A1KFV2</accession>
<comment type="function">
    <text evidence="1">Catalyzes a reversible aldol reaction between acetaldehyde and D-glyceraldehyde 3-phosphate to generate 2-deoxy-D-ribose 5-phosphate.</text>
</comment>
<comment type="catalytic activity">
    <reaction evidence="1">
        <text>2-deoxy-D-ribose 5-phosphate = D-glyceraldehyde 3-phosphate + acetaldehyde</text>
        <dbReference type="Rhea" id="RHEA:12821"/>
        <dbReference type="ChEBI" id="CHEBI:15343"/>
        <dbReference type="ChEBI" id="CHEBI:59776"/>
        <dbReference type="ChEBI" id="CHEBI:62877"/>
        <dbReference type="EC" id="4.1.2.4"/>
    </reaction>
</comment>
<comment type="pathway">
    <text evidence="1">Carbohydrate degradation; 2-deoxy-D-ribose 1-phosphate degradation; D-glyceraldehyde 3-phosphate and acetaldehyde from 2-deoxy-alpha-D-ribose 1-phosphate: step 2/2.</text>
</comment>
<comment type="subcellular location">
    <subcellularLocation>
        <location evidence="1">Cytoplasm</location>
    </subcellularLocation>
</comment>
<comment type="similarity">
    <text evidence="1">Belongs to the DeoC/FbaB aldolase family. DeoC type 1 subfamily.</text>
</comment>
<keyword id="KW-0963">Cytoplasm</keyword>
<keyword id="KW-0456">Lyase</keyword>
<keyword id="KW-0704">Schiff base</keyword>